<sequence>MSKPFKLNSAFKPSGDQPDAIRRLEEGLEDGLAHQTLLGVTGSGKTFTIANVIADLQRPTMVLAPNKTLAAQLYGEMKEFFPENAVEYFVSYYDYYQPEAYVPSSDTFIEKDASVNEHIEQMRLSATKALLERRDVVVVASVSAIYGLGDPDLYLKMMLHLTVGMLIDQRAILRRLAELQYTRNDQAFQRGTFRVRGEVIDIFPAESDDIALRVELFDEEVERLSLFDPLTGQVEATVPRYTIYPKTHYVTPRERILQAMEEIKDELADRRKVLLANNKLLEEQRLSQRTQFDLEMMNELGYCSGIENYSRFLSGRGPGEPPPTLFDYLPADGLLVVDESHVTIPQIGGMYRGDRARKETLVEYGFRLPSALDNRPLKFEEFEALAPQTIYVSATPGNYELEKSGDEVVDQVVRPTGLLDPIIEVRPVATQVDDLLSEIRQRAVINERVLVTTLTKRMAEDLTEYLEEHGERVRYLHSDIDTVERMEIIRDLRLGEFDVLVGINLLREGLDMPEVSLVAILDADKEGFLRSERSLIQTIGRAARNVNGKAILYGDKITPSMAKAIGETERRREKQQKYNEEHGITPQGLNKKVVDILALGQNIAKTKAKGKGKGRSTAKTGIVELDMTPKALQQKIHELEGQMMQHAQNLEFEEAAQIRDQLHQLRELFIAAS</sequence>
<organism>
    <name type="scientific">Salmonella arizonae (strain ATCC BAA-731 / CDC346-86 / RSK2980)</name>
    <dbReference type="NCBI Taxonomy" id="41514"/>
    <lineage>
        <taxon>Bacteria</taxon>
        <taxon>Pseudomonadati</taxon>
        <taxon>Pseudomonadota</taxon>
        <taxon>Gammaproteobacteria</taxon>
        <taxon>Enterobacterales</taxon>
        <taxon>Enterobacteriaceae</taxon>
        <taxon>Salmonella</taxon>
    </lineage>
</organism>
<comment type="function">
    <text evidence="1">The UvrABC repair system catalyzes the recognition and processing of DNA lesions. A damage recognition complex composed of 2 UvrA and 2 UvrB subunits scans DNA for abnormalities. Upon binding of the UvrA(2)B(2) complex to a putative damaged site, the DNA wraps around one UvrB monomer. DNA wrap is dependent on ATP binding by UvrB and probably causes local melting of the DNA helix, facilitating insertion of UvrB beta-hairpin between the DNA strands. Then UvrB probes one DNA strand for the presence of a lesion. If a lesion is found the UvrA subunits dissociate and the UvrB-DNA preincision complex is formed. This complex is subsequently bound by UvrC and the second UvrB is released. If no lesion is found, the DNA wraps around the other UvrB subunit that will check the other stand for damage.</text>
</comment>
<comment type="subunit">
    <text evidence="1">Forms a heterotetramer with UvrA during the search for lesions. Interacts with UvrC in an incision complex.</text>
</comment>
<comment type="subcellular location">
    <subcellularLocation>
        <location evidence="1">Cytoplasm</location>
    </subcellularLocation>
</comment>
<comment type="domain">
    <text evidence="1">The beta-hairpin motif is involved in DNA binding.</text>
</comment>
<comment type="similarity">
    <text evidence="1">Belongs to the UvrB family.</text>
</comment>
<proteinExistence type="inferred from homology"/>
<dbReference type="EMBL" id="CP000880">
    <property type="protein sequence ID" value="ABX22004.1"/>
    <property type="molecule type" value="Genomic_DNA"/>
</dbReference>
<dbReference type="SMR" id="A9MJE1"/>
<dbReference type="STRING" id="41514.SARI_02127"/>
<dbReference type="KEGG" id="ses:SARI_02127"/>
<dbReference type="HOGENOM" id="CLU_009621_2_1_6"/>
<dbReference type="Proteomes" id="UP000002084">
    <property type="component" value="Chromosome"/>
</dbReference>
<dbReference type="GO" id="GO:0005737">
    <property type="term" value="C:cytoplasm"/>
    <property type="evidence" value="ECO:0007669"/>
    <property type="project" value="UniProtKB-SubCell"/>
</dbReference>
<dbReference type="GO" id="GO:0009380">
    <property type="term" value="C:excinuclease repair complex"/>
    <property type="evidence" value="ECO:0007669"/>
    <property type="project" value="InterPro"/>
</dbReference>
<dbReference type="GO" id="GO:0005524">
    <property type="term" value="F:ATP binding"/>
    <property type="evidence" value="ECO:0007669"/>
    <property type="project" value="UniProtKB-UniRule"/>
</dbReference>
<dbReference type="GO" id="GO:0016887">
    <property type="term" value="F:ATP hydrolysis activity"/>
    <property type="evidence" value="ECO:0007669"/>
    <property type="project" value="InterPro"/>
</dbReference>
<dbReference type="GO" id="GO:0003677">
    <property type="term" value="F:DNA binding"/>
    <property type="evidence" value="ECO:0007669"/>
    <property type="project" value="UniProtKB-UniRule"/>
</dbReference>
<dbReference type="GO" id="GO:0009381">
    <property type="term" value="F:excinuclease ABC activity"/>
    <property type="evidence" value="ECO:0007669"/>
    <property type="project" value="UniProtKB-UniRule"/>
</dbReference>
<dbReference type="GO" id="GO:0004386">
    <property type="term" value="F:helicase activity"/>
    <property type="evidence" value="ECO:0007669"/>
    <property type="project" value="UniProtKB-KW"/>
</dbReference>
<dbReference type="GO" id="GO:0006289">
    <property type="term" value="P:nucleotide-excision repair"/>
    <property type="evidence" value="ECO:0007669"/>
    <property type="project" value="UniProtKB-UniRule"/>
</dbReference>
<dbReference type="GO" id="GO:0009432">
    <property type="term" value="P:SOS response"/>
    <property type="evidence" value="ECO:0007669"/>
    <property type="project" value="UniProtKB-UniRule"/>
</dbReference>
<dbReference type="CDD" id="cd17916">
    <property type="entry name" value="DEXHc_UvrB"/>
    <property type="match status" value="1"/>
</dbReference>
<dbReference type="CDD" id="cd18790">
    <property type="entry name" value="SF2_C_UvrB"/>
    <property type="match status" value="1"/>
</dbReference>
<dbReference type="FunFam" id="3.40.50.300:FF:000257">
    <property type="entry name" value="UvrABC system protein B"/>
    <property type="match status" value="1"/>
</dbReference>
<dbReference type="FunFam" id="3.40.50.300:FF:000401">
    <property type="entry name" value="UvrABC system protein B"/>
    <property type="match status" value="1"/>
</dbReference>
<dbReference type="FunFam" id="3.40.50.300:FF:000477">
    <property type="entry name" value="UvrABC system protein B"/>
    <property type="match status" value="1"/>
</dbReference>
<dbReference type="Gene3D" id="3.40.50.300">
    <property type="entry name" value="P-loop containing nucleotide triphosphate hydrolases"/>
    <property type="match status" value="3"/>
</dbReference>
<dbReference type="Gene3D" id="4.10.860.10">
    <property type="entry name" value="UVR domain"/>
    <property type="match status" value="1"/>
</dbReference>
<dbReference type="HAMAP" id="MF_00204">
    <property type="entry name" value="UvrB"/>
    <property type="match status" value="1"/>
</dbReference>
<dbReference type="InterPro" id="IPR006935">
    <property type="entry name" value="Helicase/UvrB_N"/>
</dbReference>
<dbReference type="InterPro" id="IPR014001">
    <property type="entry name" value="Helicase_ATP-bd"/>
</dbReference>
<dbReference type="InterPro" id="IPR001650">
    <property type="entry name" value="Helicase_C-like"/>
</dbReference>
<dbReference type="InterPro" id="IPR027417">
    <property type="entry name" value="P-loop_NTPase"/>
</dbReference>
<dbReference type="InterPro" id="IPR001943">
    <property type="entry name" value="UVR_dom"/>
</dbReference>
<dbReference type="InterPro" id="IPR036876">
    <property type="entry name" value="UVR_dom_sf"/>
</dbReference>
<dbReference type="InterPro" id="IPR004807">
    <property type="entry name" value="UvrB"/>
</dbReference>
<dbReference type="InterPro" id="IPR041471">
    <property type="entry name" value="UvrB_inter"/>
</dbReference>
<dbReference type="InterPro" id="IPR024759">
    <property type="entry name" value="UvrB_YAD/RRR_dom"/>
</dbReference>
<dbReference type="NCBIfam" id="NF003673">
    <property type="entry name" value="PRK05298.1"/>
    <property type="match status" value="1"/>
</dbReference>
<dbReference type="NCBIfam" id="TIGR00631">
    <property type="entry name" value="uvrb"/>
    <property type="match status" value="1"/>
</dbReference>
<dbReference type="PANTHER" id="PTHR24029">
    <property type="entry name" value="UVRABC SYSTEM PROTEIN B"/>
    <property type="match status" value="1"/>
</dbReference>
<dbReference type="PANTHER" id="PTHR24029:SF0">
    <property type="entry name" value="UVRABC SYSTEM PROTEIN B"/>
    <property type="match status" value="1"/>
</dbReference>
<dbReference type="Pfam" id="PF00271">
    <property type="entry name" value="Helicase_C"/>
    <property type="match status" value="1"/>
</dbReference>
<dbReference type="Pfam" id="PF04851">
    <property type="entry name" value="ResIII"/>
    <property type="match status" value="1"/>
</dbReference>
<dbReference type="Pfam" id="PF02151">
    <property type="entry name" value="UVR"/>
    <property type="match status" value="1"/>
</dbReference>
<dbReference type="Pfam" id="PF12344">
    <property type="entry name" value="UvrB"/>
    <property type="match status" value="1"/>
</dbReference>
<dbReference type="Pfam" id="PF17757">
    <property type="entry name" value="UvrB_inter"/>
    <property type="match status" value="1"/>
</dbReference>
<dbReference type="SMART" id="SM00487">
    <property type="entry name" value="DEXDc"/>
    <property type="match status" value="1"/>
</dbReference>
<dbReference type="SMART" id="SM00490">
    <property type="entry name" value="HELICc"/>
    <property type="match status" value="1"/>
</dbReference>
<dbReference type="SUPFAM" id="SSF46600">
    <property type="entry name" value="C-terminal UvrC-binding domain of UvrB"/>
    <property type="match status" value="1"/>
</dbReference>
<dbReference type="SUPFAM" id="SSF52540">
    <property type="entry name" value="P-loop containing nucleoside triphosphate hydrolases"/>
    <property type="match status" value="2"/>
</dbReference>
<dbReference type="PROSITE" id="PS51192">
    <property type="entry name" value="HELICASE_ATP_BIND_1"/>
    <property type="match status" value="1"/>
</dbReference>
<dbReference type="PROSITE" id="PS51194">
    <property type="entry name" value="HELICASE_CTER"/>
    <property type="match status" value="1"/>
</dbReference>
<dbReference type="PROSITE" id="PS50151">
    <property type="entry name" value="UVR"/>
    <property type="match status" value="1"/>
</dbReference>
<evidence type="ECO:0000255" key="1">
    <source>
        <dbReference type="HAMAP-Rule" id="MF_00204"/>
    </source>
</evidence>
<reference key="1">
    <citation type="submission" date="2007-11" db="EMBL/GenBank/DDBJ databases">
        <authorList>
            <consortium name="The Salmonella enterica serovar Arizonae Genome Sequencing Project"/>
            <person name="McClelland M."/>
            <person name="Sanderson E.K."/>
            <person name="Porwollik S."/>
            <person name="Spieth J."/>
            <person name="Clifton W.S."/>
            <person name="Fulton R."/>
            <person name="Chunyan W."/>
            <person name="Wollam A."/>
            <person name="Shah N."/>
            <person name="Pepin K."/>
            <person name="Bhonagiri V."/>
            <person name="Nash W."/>
            <person name="Johnson M."/>
            <person name="Thiruvilangam P."/>
            <person name="Wilson R."/>
        </authorList>
    </citation>
    <scope>NUCLEOTIDE SEQUENCE [LARGE SCALE GENOMIC DNA]</scope>
    <source>
        <strain>ATCC BAA-731 / CDC346-86 / RSK2980</strain>
    </source>
</reference>
<keyword id="KW-0067">ATP-binding</keyword>
<keyword id="KW-0963">Cytoplasm</keyword>
<keyword id="KW-0227">DNA damage</keyword>
<keyword id="KW-0228">DNA excision</keyword>
<keyword id="KW-0234">DNA repair</keyword>
<keyword id="KW-0267">Excision nuclease</keyword>
<keyword id="KW-0347">Helicase</keyword>
<keyword id="KW-0378">Hydrolase</keyword>
<keyword id="KW-0547">Nucleotide-binding</keyword>
<keyword id="KW-1185">Reference proteome</keyword>
<keyword id="KW-0742">SOS response</keyword>
<feature type="chain" id="PRO_1000077919" description="UvrABC system protein B">
    <location>
        <begin position="1"/>
        <end position="673"/>
    </location>
</feature>
<feature type="domain" description="Helicase ATP-binding" evidence="1">
    <location>
        <begin position="26"/>
        <end position="183"/>
    </location>
</feature>
<feature type="domain" description="Helicase C-terminal" evidence="1">
    <location>
        <begin position="431"/>
        <end position="597"/>
    </location>
</feature>
<feature type="domain" description="UVR" evidence="1">
    <location>
        <begin position="633"/>
        <end position="668"/>
    </location>
</feature>
<feature type="short sequence motif" description="Beta-hairpin">
    <location>
        <begin position="92"/>
        <end position="115"/>
    </location>
</feature>
<feature type="binding site" evidence="1">
    <location>
        <begin position="39"/>
        <end position="46"/>
    </location>
    <ligand>
        <name>ATP</name>
        <dbReference type="ChEBI" id="CHEBI:30616"/>
    </ligand>
</feature>
<name>UVRB_SALAR</name>
<accession>A9MJE1</accession>
<protein>
    <recommendedName>
        <fullName evidence="1">UvrABC system protein B</fullName>
        <shortName evidence="1">Protein UvrB</shortName>
    </recommendedName>
    <alternativeName>
        <fullName evidence="1">Excinuclease ABC subunit B</fullName>
    </alternativeName>
</protein>
<gene>
    <name evidence="1" type="primary">uvrB</name>
    <name type="ordered locus">SARI_02127</name>
</gene>